<comment type="function">
    <text evidence="8 9 11 15 16 17 18 19">Regulates G protein-coupled receptor signaling cascades. Inhibits signal transduction by increasing the GTPase activity of G protein alpha subunits, thereby driving them into their inactive GDP-bound form. Besides, modulates signal transduction via G protein alpha subunits by functioning as a GDP-dissociation inhibitor (GDI) (PubMed:11976690). Has GDI activity on G(i) alpha subunits GNAI1 and GNAI3, but not on GNAI2 and G(o)-alpha subunit GNAO1. Has GAP activity on GNAI0, GNAI2 and GNAI3. May act as a scaffold integrating G protein and Ras/Raf MAPkinase signaling pathways. Inhibits platelet-derived growth factor (PDGF)-stimulated ERK1/ERK2 phosphorylation; a process depending on its interaction with HRAS and that is reversed by G(i) alpha subunit GNAI1. Acts as a positive modulator of microtubule polymerisation and spindle organization through a G(i)-alpha-dependent mechanism. Plays a role in cell division; required for completion of the first mitotic division of the embryo. Involved in visual memory processing capacity; when overexpressed in the V2 secondary visual cortex area. Involved in hippocampal-based learning and memory; acts as a suppressor of synaptic plasticity in CA2 neurons. Required for the nerve growth factor (NGF)-mediated neurite outgrowth. Involved in stress resistance.</text>
</comment>
<comment type="subunit">
    <text evidence="2 3 8 9 13 14 15 17 18">Interacts with GNAI1, GNAI2 and GNAI3 (PubMed:11387333, PubMed:11976690, PubMed:16870394, PubMed:17603074, PubMed:21158412). Interacts with GNAO1 (By similarity). Interacts (via RGS and GoLoco domains) with GNAI1; the interaction occurs in the centrosomes. Interaction with GNAI1 or GNAI3 (via active GTP- or inactive GDP-bound forms) prevents association of RGS14 with centrosomes or nuclear localization. Interacts with RABGEF1; the interactions is GTP-dependent. Interacts with RAP2A; the interactions is GTP-dependent and does not alter its function on G(i) alpha subunits either as GAP or as GDI. Associates with microtubules (By similarity). Found in a complex with at least BRAF, HRAS, MAP2K1, MAPK3 and RGS14 (PubMed:19319189). Interacts with RIC8A (via C-terminus) (PubMed:21158412). Interacts (via RBD 1 domain) with HRAS (active GTP-bound form preferentially). Interacts (via RBD domains) with BRAF (via N-terminus); the interaction mediates the formation of a ternary complex with RAF1. Interacts (via RBD domains) with RAF1 (via N-terminus); the interaction mediates the formation of a ternary complex with BRAF (PubMed:19878719). Interacts with KRAS (active GTP-bound form preferentially), MRAS (active GTP-bound form preferentially), NRAS (active GTP-bound form preferentially) and RRAS (active GTP-bound form preferentially) (PubMed:19319189).</text>
</comment>
<comment type="subcellular location">
    <subcellularLocation>
        <location>Nucleus</location>
    </subcellularLocation>
    <subcellularLocation>
        <location evidence="1">Nucleus</location>
        <location evidence="1">PML body</location>
    </subcellularLocation>
    <subcellularLocation>
        <location>Cytoplasm</location>
    </subcellularLocation>
    <subcellularLocation>
        <location>Membrane</location>
    </subcellularLocation>
    <subcellularLocation>
        <location>Cell membrane</location>
    </subcellularLocation>
    <subcellularLocation>
        <location>Cytoplasm</location>
        <location>Cytoskeleton</location>
        <location>Microtubule organizing center</location>
        <location>Centrosome</location>
    </subcellularLocation>
    <subcellularLocation>
        <location evidence="1">Cytoplasm</location>
        <location evidence="1">Cytoskeleton</location>
        <location evidence="1">Spindle</location>
    </subcellularLocation>
    <subcellularLocation>
        <location>Cytoplasm</location>
        <location>Cytoskeleton</location>
        <location>Spindle pole</location>
    </subcellularLocation>
    <subcellularLocation>
        <location evidence="1">Cell projection</location>
        <location evidence="1">Dendrite</location>
    </subcellularLocation>
    <subcellularLocation>
        <location evidence="1">Cell projection</location>
        <location evidence="1">Dendritic spine</location>
    </subcellularLocation>
    <subcellularLocation>
        <location evidence="1">Postsynaptic density</location>
    </subcellularLocation>
    <text evidence="1">Associates with the perinuclear sheaths of microtubules (MTs) surrounding the pronuclei, prior to segregating to the anastral mitotic apparatus and subsequently the barrel-shaped cytoplasmic bridge between the nascent nuclei of the emerging 2-cell embryo. Localizes to a perinuclear compartment near the microtubule-organizing center (MTOC). Expressed in the nucleus during interphase and segregates to the centrosomes and astral MTs during mitosis. Shuttles between the nucleus and cytoplasm in a CRM1-dependent manner. Relocalizes to the nucleus in PML nuclear bodies in respons to heat stress. Colocalizes with RIC8A in CA2 hippocampal neurons (By similarity). Localizes with spindle poles during metaphase. Shuttles between the nucleus and cytoplasm in a CRM1-dependent manner. Recruited from the cytosol to the plasma membrane by the inactive GDP-bound forms of G(i) alpha subunits GNAI1 and GNAI3. Recruited from the cytosol to membranes by the active GTP-bound form of HRAS. Colocalizes with G(i) alpha subunit GNAI1 and RIC8A at the plasma membrane. Colocalizes with BRAF and RAF1 in both the cytoplasm and membranes.</text>
</comment>
<comment type="tissue specificity">
    <text evidence="12 16">Expressed in neurons of the V2 secondary visual cortex area (at protein level). Expressed at high levels in the brain cortex, hippocampus, striatum, thalamus and substantia nigra, in the lung, and spleen. Low expression has been found in heart, liver, skeletal muscle and testis.</text>
</comment>
<comment type="domain">
    <text evidence="11">The RGS domain is necessary for GTPase-activating protein (GAP) activity for G subunits and localization to the nucleus and centrosomes.</text>
</comment>
<comment type="domain">
    <text evidence="11">The GoLoco domain is necessary for GDP-dissociation inhibitor (GDI) activity, translocation out of the nucleus and interaction with G(i) alpha subunits GNAI1, GNAI2 and GNAI3.</text>
</comment>
<comment type="domain">
    <text evidence="11">The RBD domains are necessary for localization to the nucleus and centrosomes.</text>
</comment>
<comment type="PTM">
    <text evidence="10">Phosphorylated by PKC. Phosphorylation is increased in presence of forskolin and may enhance the GDI activity on G(i) alpha subunit GNAI1.</text>
</comment>
<keyword id="KW-0002">3D-structure</keyword>
<keyword id="KW-0131">Cell cycle</keyword>
<keyword id="KW-0132">Cell division</keyword>
<keyword id="KW-1003">Cell membrane</keyword>
<keyword id="KW-0966">Cell projection</keyword>
<keyword id="KW-0963">Cytoplasm</keyword>
<keyword id="KW-0206">Cytoskeleton</keyword>
<keyword id="KW-0217">Developmental protein</keyword>
<keyword id="KW-0343">GTPase activation</keyword>
<keyword id="KW-0472">Membrane</keyword>
<keyword id="KW-0493">Microtubule</keyword>
<keyword id="KW-0539">Nucleus</keyword>
<keyword id="KW-0597">Phosphoprotein</keyword>
<keyword id="KW-1185">Reference proteome</keyword>
<keyword id="KW-0677">Repeat</keyword>
<keyword id="KW-0734">Signal transduction inhibitor</keyword>
<keyword id="KW-0770">Synapse</keyword>
<sequence>MPGKPKHLGVPNGRMVLAVSDGELTSTSGSQAQGEGRGSSLSIHSLPSGPSSPFSTDEQPVASWAQSFERLLQDPRGLAYFTEFLKKEFSAENVTFWQACERFQQIPASDTKQLAQEAHNIYHEFLSSQALSPVNIDRQAWLSEEVLAQPRPDMFRAQQLQIFNLMKFDSYARFVKSPLYQECLLAEAEGRPLREPGSSHLGSPDTARKKPKLKPGKSLPLGVEELGQLPLAEGRPLRKSFRREMPGGAVNSALRRESQGSLNSSASLDLGFLAFVSSKSESHRKSLGSGEGESESRPGKYCCVYLPDGTASLALARPGLTIRDMLAGICEKRGLSLPDIKVYLVGKEQKALVLDQDCTVLADQEVRLENRITFQLELVGLERVVRISAKPTKRLQEALQPILAKHGLSLDQVVLHRPGEKQLVDLENLVSSVASQTLVLDTLPDAKTREASSIPPCRSQGCLPRTQTKDSHLPPLSSSLSVEDASGSTGKRQTCDIEGLVELLNRVQSSGAHDQRGLLRKEDLVLPEFLQLPSQRPGSQEAPP</sequence>
<reference key="1">
    <citation type="journal article" date="1997" name="Biochem. Biophys. Res. Commun.">
        <title>Molecular cloning and expression analysis of rat Rgs12 and Rgs14.</title>
        <authorList>
            <person name="Snow B.E."/>
            <person name="Antonio L."/>
            <person name="Suggs S."/>
            <person name="Gutstein H.B."/>
            <person name="Siderovski D.P."/>
        </authorList>
    </citation>
    <scope>NUCLEOTIDE SEQUENCE [MRNA]</scope>
    <source>
        <tissue>Brain</tissue>
    </source>
</reference>
<reference key="2">
    <citation type="journal article" date="2001" name="J. Biol. Chem.">
        <title>RGS12 and RGS14 GoLoco motifs are G alpha(i) interaction sites with guanine nucleotide dissociation inhibitor activity.</title>
        <authorList>
            <person name="Kimple R.J."/>
            <person name="De Vries L."/>
            <person name="Tronchere H."/>
            <person name="Behe C.I."/>
            <person name="Morris R.A."/>
            <person name="Gist Farquhar M."/>
            <person name="Siderovski D.P."/>
        </authorList>
    </citation>
    <scope>FUNCTION</scope>
    <scope>INTERACTION WITH GNAI1; GNAI2 AND GNAI3</scope>
</reference>
<reference key="3">
    <citation type="journal article" date="2003" name="Biochemistry">
        <title>Phosphorylation of RGS14 by protein kinase A potentiates its activity toward G alpha i.</title>
        <authorList>
            <person name="Hollinger S."/>
            <person name="Ramineni S."/>
            <person name="Hepler J.R."/>
        </authorList>
    </citation>
    <scope>PHOSPHORYLATION</scope>
    <scope>MUTAGENESIS OF SER-258 AND THR-494</scope>
    <scope>FUNCTION</scope>
</reference>
<reference key="4">
    <citation type="journal article" date="2004" name="J. Biol. Chem.">
        <title>The RGS14 GoLoco domain discriminates among Galphai isoforms.</title>
        <authorList>
            <person name="Mittal V."/>
            <person name="Linder M.E."/>
        </authorList>
    </citation>
    <scope>FUNCTION</scope>
    <scope>DOMAIN</scope>
</reference>
<reference key="5">
    <citation type="journal article" date="2006" name="Eur. J. Neurosci.">
        <title>Localization of the GoLoco motif carrier regulator of G-protein signalling 12 and 14 proteins in monkey and rat brain.</title>
        <authorList>
            <person name="Lopez-Aranda M.F."/>
            <person name="Acevedo M.J."/>
            <person name="Carballo F.J."/>
            <person name="Gutierrez A."/>
            <person name="Khan Z.U."/>
        </authorList>
    </citation>
    <scope>TISSUE SPECIFICITY</scope>
    <scope>SUBCELLULAR LOCATION</scope>
    <source>
        <tissue>Brain</tissue>
    </source>
</reference>
<reference key="6">
    <citation type="journal article" date="2007" name="Cell. Signal.">
        <title>Selective interactions between Gi alpha1 and Gi alpha3 and the GoLoco/GPR domain of RGS14 influence its dynamic subcellular localization.</title>
        <authorList>
            <person name="Shu F.J."/>
            <person name="Ramineni S."/>
            <person name="Amyot W."/>
            <person name="Hepler J.R."/>
        </authorList>
    </citation>
    <scope>INTERACTION WITH GNAI1 AND GNAI3</scope>
    <scope>SUBCELLULAR LOCATION</scope>
</reference>
<reference key="7">
    <citation type="journal article" date="2007" name="J. Mol. Biol.">
        <title>Structure-based protocol for identifying mutations that enhance protein-protein binding affinities.</title>
        <authorList>
            <person name="Sammond D.W."/>
            <person name="Eletr Z.M."/>
            <person name="Purbeck C."/>
            <person name="Kimple R.J."/>
            <person name="Siderovski D.P."/>
            <person name="Kuhlman B."/>
        </authorList>
    </citation>
    <scope>MUTAGENESIS OF GLN-508; LEU-518; VAL-525 AND PHE-529</scope>
    <scope>INTERACTION WITH GNAI1</scope>
</reference>
<reference key="8">
    <citation type="journal article" date="2009" name="PLoS ONE">
        <title>Regulator of G-protein signaling 14 (RGS14) is a selective H-Ras effector.</title>
        <authorList>
            <person name="Willard F.S."/>
            <person name="Willard M.D."/>
            <person name="Kimple A.J."/>
            <person name="Soundararajan M."/>
            <person name="Oestreich E.A."/>
            <person name="Li X."/>
            <person name="Sowa N.A."/>
            <person name="Kimple R.J."/>
            <person name="Doyle D.A."/>
            <person name="Der C.J."/>
            <person name="Zylka M.J."/>
            <person name="Snider W.D."/>
            <person name="Siderovski D.P."/>
        </authorList>
    </citation>
    <scope>FUNCTION</scope>
    <scope>IDENTIFICATION IN A COMPLEX WITH BRAF; HRAS; MAP2K1 AND MAPK3</scope>
    <scope>INTERACTION WITH BRAF; HRAS; KRAS; MRAS; NRAS; RAF1 AND RRAS</scope>
</reference>
<reference key="9">
    <citation type="journal article" date="2009" name="Science">
        <title>Role of layer 6 of V2 visual cortex in object-recognition memory.</title>
        <authorList>
            <person name="Lopez-Aranda M.F."/>
            <person name="Lopez-Tellez J.F."/>
            <person name="Navarro-Lobato I."/>
            <person name="Masmudi-Martin M."/>
            <person name="Gutierrez A."/>
            <person name="Khan Z.U."/>
        </authorList>
    </citation>
    <scope>FUNCTION</scope>
    <scope>TISSUE SPECIFICITY</scope>
</reference>
<reference key="10">
    <citation type="journal article" date="2010" name="Cell. Signal.">
        <title>RGS14 is a multifunctional scaffold that integrates G protein and Ras/Raf MAPkinase signalling pathways.</title>
        <authorList>
            <person name="Shu F.J."/>
            <person name="Ramineni S."/>
            <person name="Hepler J.R."/>
        </authorList>
    </citation>
    <scope>FUNCTION</scope>
    <scope>INTERACTION WITH BRAF; HRAS AND RAF1</scope>
    <scope>MUTAGENESIS OF ARG-333 AND HIS-406</scope>
    <scope>SUBCELLULAR LOCATION</scope>
</reference>
<reference key="11">
    <citation type="journal article" date="2011" name="Aging Cell">
        <title>Regulation of longevity by regulator of G-protein signaling (RGS) protein, Loco.</title>
        <authorList>
            <person name="Lin Y.R."/>
            <person name="Kim K."/>
            <person name="Yang Y."/>
            <person name="Ivessa A."/>
            <person name="Sadoshima J."/>
            <person name="Park Y."/>
        </authorList>
    </citation>
    <scope>FUNCTION</scope>
</reference>
<reference key="12">
    <citation type="journal article" date="2011" name="Biochemistry">
        <title>Activation of the regulator of G protein signaling 14-Galphai1-GDP signaling complex is regulated by resistance to inhibitors of cholinesterase-8A.</title>
        <authorList>
            <person name="Vellano C.P."/>
            <person name="Shu F.J."/>
            <person name="Ramineni S."/>
            <person name="Yates C.K."/>
            <person name="Tall G.G."/>
            <person name="Hepler J.R."/>
        </authorList>
    </citation>
    <scope>FUNCTION</scope>
    <scope>INTERACTION WITH GNAI1 AND RIC8A</scope>
    <scope>SUBCELLULAR LOCATION</scope>
</reference>
<reference key="13">
    <citation type="journal article" date="2012" name="Nat. Commun.">
        <title>Quantitative maps of protein phosphorylation sites across 14 different rat organs and tissues.</title>
        <authorList>
            <person name="Lundby A."/>
            <person name="Secher A."/>
            <person name="Lage K."/>
            <person name="Nordsborg N.B."/>
            <person name="Dmytriyev A."/>
            <person name="Lundby C."/>
            <person name="Olsen J.V."/>
        </authorList>
    </citation>
    <scope>PHOSPHORYLATION [LARGE SCALE ANALYSIS] AT SER-20; SER-143; SER-203; SER-218; SER-286 AND SER-481</scope>
    <scope>IDENTIFICATION BY MASS SPECTROMETRY [LARGE SCALE ANALYSIS]</scope>
</reference>
<reference evidence="20" key="14">
    <citation type="journal article" date="2002" name="Nature">
        <title>Structural determinants for GoLoco-induced inhibition of nucleotide release by Galpha subunits.</title>
        <authorList>
            <person name="Kimple R.J."/>
            <person name="Kimple M.E."/>
            <person name="Betts L."/>
            <person name="Sondek J."/>
            <person name="Siderovski D.P."/>
        </authorList>
    </citation>
    <scope>X-RAY CRYSTALLOGRAPHY (2.70 ANGSTROMS) OF 496-531 IN COMPLEX WITH GNAI1</scope>
    <scope>INTERACTION WITH GNAI1</scope>
    <scope>FUNCTION</scope>
</reference>
<organism>
    <name type="scientific">Rattus norvegicus</name>
    <name type="common">Rat</name>
    <dbReference type="NCBI Taxonomy" id="10116"/>
    <lineage>
        <taxon>Eukaryota</taxon>
        <taxon>Metazoa</taxon>
        <taxon>Chordata</taxon>
        <taxon>Craniata</taxon>
        <taxon>Vertebrata</taxon>
        <taxon>Euteleostomi</taxon>
        <taxon>Mammalia</taxon>
        <taxon>Eutheria</taxon>
        <taxon>Euarchontoglires</taxon>
        <taxon>Glires</taxon>
        <taxon>Rodentia</taxon>
        <taxon>Myomorpha</taxon>
        <taxon>Muroidea</taxon>
        <taxon>Muridae</taxon>
        <taxon>Murinae</taxon>
        <taxon>Rattus</taxon>
    </lineage>
</organism>
<gene>
    <name type="primary">Rgs14</name>
</gene>
<accession>O08773</accession>
<protein>
    <recommendedName>
        <fullName>Regulator of G-protein signaling 14</fullName>
        <shortName>RGS14</shortName>
    </recommendedName>
</protein>
<feature type="chain" id="PRO_0000204219" description="Regulator of G-protein signaling 14">
    <location>
        <begin position="1"/>
        <end position="544"/>
    </location>
</feature>
<feature type="domain" description="RGS" evidence="5">
    <location>
        <begin position="67"/>
        <end position="184"/>
    </location>
</feature>
<feature type="domain" description="RBD 1" evidence="6">
    <location>
        <begin position="300"/>
        <end position="371"/>
    </location>
</feature>
<feature type="domain" description="RBD 2" evidence="6">
    <location>
        <begin position="373"/>
        <end position="443"/>
    </location>
</feature>
<feature type="domain" description="GoLoco" evidence="4">
    <location>
        <begin position="497"/>
        <end position="519"/>
    </location>
</feature>
<feature type="region of interest" description="Disordered" evidence="7">
    <location>
        <begin position="19"/>
        <end position="59"/>
    </location>
</feature>
<feature type="region of interest" description="Disordered" evidence="7">
    <location>
        <begin position="191"/>
        <end position="220"/>
    </location>
</feature>
<feature type="region of interest" description="Necessary for interaction with RABGEF1" evidence="1">
    <location>
        <begin position="297"/>
        <end position="424"/>
    </location>
</feature>
<feature type="region of interest" description="Disordered" evidence="7">
    <location>
        <begin position="449"/>
        <end position="493"/>
    </location>
</feature>
<feature type="compositionally biased region" description="Polar residues" evidence="7">
    <location>
        <begin position="23"/>
        <end position="58"/>
    </location>
</feature>
<feature type="modified residue" description="Phosphoserine" evidence="21">
    <location>
        <position position="20"/>
    </location>
</feature>
<feature type="modified residue" description="Phosphoserine" evidence="2">
    <location>
        <position position="42"/>
    </location>
</feature>
<feature type="modified residue" description="Phosphoserine" evidence="2">
    <location>
        <position position="45"/>
    </location>
</feature>
<feature type="modified residue" description="Phosphoserine" evidence="21">
    <location>
        <position position="143"/>
    </location>
</feature>
<feature type="modified residue" description="Phosphoserine" evidence="3">
    <location>
        <position position="199"/>
    </location>
</feature>
<feature type="modified residue" description="Phosphoserine" evidence="21">
    <location>
        <position position="203"/>
    </location>
</feature>
<feature type="modified residue" description="Phosphoserine" evidence="21">
    <location>
        <position position="218"/>
    </location>
</feature>
<feature type="modified residue" description="Phosphoserine" evidence="21">
    <location>
        <position position="286"/>
    </location>
</feature>
<feature type="modified residue" description="Phosphoserine" evidence="21">
    <location>
        <position position="481"/>
    </location>
</feature>
<feature type="mutagenesis site" description="Inhibits phosphorylation; when associated with A-494." evidence="10">
    <original>S</original>
    <variation>A</variation>
    <location>
        <position position="258"/>
    </location>
</feature>
<feature type="mutagenesis site" description="Abolishes the inhibition of PDGF-mediated ERK1/ERK2 phosphorylation. Inhibits interaction with HRAS and does not colocalize with active GTP-bound form of HRAS at membranes. Does not inhibit interaction with BRAF or RAF1." evidence="17">
    <original>R</original>
    <variation>L</variation>
    <location>
        <position position="333"/>
    </location>
</feature>
<feature type="mutagenesis site" description="Does not inhibit interaction and colocalization with active GTP-bound form of HRAS at membranes. Does not inhibit interaction with BRAF or RAF1." evidence="17">
    <original>H</original>
    <variation>A</variation>
    <location>
        <position position="406"/>
    </location>
</feature>
<feature type="mutagenesis site" description="Does not increase the GDI activity against GNAI1. Does not alter GTPase activity against GNAO1 or GNAI1. Inhibits phosphorylation; when associated with A-258." evidence="10">
    <original>T</original>
    <variation>A</variation>
    <location>
        <position position="494"/>
    </location>
</feature>
<feature type="mutagenesis site" description="Increases the GDI activity against GNAI1. Does not alter GTPase activity against GNAO1 or GNAI1." evidence="10">
    <original>T</original>
    <variation>D</variation>
    <location>
        <position position="494"/>
    </location>
</feature>
<feature type="mutagenesis site" description="Increases the GDI activity against GNAI1. Does not alter GTPase activity against GNAO1 or GNAI1." evidence="10">
    <original>T</original>
    <variation>E</variation>
    <location>
        <position position="494"/>
    </location>
</feature>
<feature type="mutagenesis site" description="Inhibits the interaction with GNAI1." evidence="14">
    <original>Q</original>
    <variation>L</variation>
    <location>
        <position position="508"/>
    </location>
</feature>
<feature type="mutagenesis site" description="Increases the interaction with GNAI1." evidence="14">
    <original>L</original>
    <variation>Y</variation>
    <location>
        <position position="518"/>
    </location>
</feature>
<feature type="mutagenesis site" description="Increases the interaction with GNAI1." evidence="14">
    <original>V</original>
    <variation>W</variation>
    <location>
        <position position="525"/>
    </location>
</feature>
<feature type="mutagenesis site" description="Increases the interaction with GNAI1." evidence="14">
    <original>F</original>
    <variation>W</variation>
    <location>
        <position position="529"/>
    </location>
</feature>
<feature type="helix" evidence="22">
    <location>
        <begin position="497"/>
        <end position="505"/>
    </location>
</feature>
<feature type="turn" evidence="22">
    <location>
        <begin position="506"/>
        <end position="509"/>
    </location>
</feature>
<feature type="helix" evidence="22">
    <location>
        <begin position="510"/>
        <end position="513"/>
    </location>
</feature>
<feature type="helix" evidence="22">
    <location>
        <begin position="521"/>
        <end position="524"/>
    </location>
</feature>
<name>RGS14_RAT</name>
<evidence type="ECO:0000250" key="1"/>
<evidence type="ECO:0000250" key="2">
    <source>
        <dbReference type="UniProtKB" id="O43566"/>
    </source>
</evidence>
<evidence type="ECO:0000250" key="3">
    <source>
        <dbReference type="UniProtKB" id="P97492"/>
    </source>
</evidence>
<evidence type="ECO:0000255" key="4">
    <source>
        <dbReference type="PROSITE-ProRule" id="PRU00097"/>
    </source>
</evidence>
<evidence type="ECO:0000255" key="5">
    <source>
        <dbReference type="PROSITE-ProRule" id="PRU00171"/>
    </source>
</evidence>
<evidence type="ECO:0000255" key="6">
    <source>
        <dbReference type="PROSITE-ProRule" id="PRU00262"/>
    </source>
</evidence>
<evidence type="ECO:0000256" key="7">
    <source>
        <dbReference type="SAM" id="MobiDB-lite"/>
    </source>
</evidence>
<evidence type="ECO:0000269" key="8">
    <source>
    </source>
</evidence>
<evidence type="ECO:0000269" key="9">
    <source>
    </source>
</evidence>
<evidence type="ECO:0000269" key="10">
    <source>
    </source>
</evidence>
<evidence type="ECO:0000269" key="11">
    <source>
    </source>
</evidence>
<evidence type="ECO:0000269" key="12">
    <source>
    </source>
</evidence>
<evidence type="ECO:0000269" key="13">
    <source>
    </source>
</evidence>
<evidence type="ECO:0000269" key="14">
    <source>
    </source>
</evidence>
<evidence type="ECO:0000269" key="15">
    <source>
    </source>
</evidence>
<evidence type="ECO:0000269" key="16">
    <source>
    </source>
</evidence>
<evidence type="ECO:0000269" key="17">
    <source>
    </source>
</evidence>
<evidence type="ECO:0000269" key="18">
    <source>
    </source>
</evidence>
<evidence type="ECO:0000269" key="19">
    <source>
    </source>
</evidence>
<evidence type="ECO:0007744" key="20">
    <source>
        <dbReference type="PDB" id="1KJY"/>
    </source>
</evidence>
<evidence type="ECO:0007744" key="21">
    <source>
    </source>
</evidence>
<evidence type="ECO:0007829" key="22">
    <source>
        <dbReference type="PDB" id="1KJY"/>
    </source>
</evidence>
<dbReference type="EMBL" id="U92279">
    <property type="protein sequence ID" value="AAC53175.1"/>
    <property type="molecule type" value="mRNA"/>
</dbReference>
<dbReference type="PIR" id="JC5503">
    <property type="entry name" value="JC5503"/>
</dbReference>
<dbReference type="RefSeq" id="NP_446216.1">
    <property type="nucleotide sequence ID" value="NM_053764.2"/>
</dbReference>
<dbReference type="RefSeq" id="XP_063132089.1">
    <property type="nucleotide sequence ID" value="XM_063276019.1"/>
</dbReference>
<dbReference type="PDB" id="1KJY">
    <property type="method" value="X-ray"/>
    <property type="resolution" value="2.70 A"/>
    <property type="chains" value="B/D=496-531"/>
</dbReference>
<dbReference type="PDBsum" id="1KJY"/>
<dbReference type="BMRB" id="O08773"/>
<dbReference type="SMR" id="O08773"/>
<dbReference type="CORUM" id="O08773"/>
<dbReference type="FunCoup" id="O08773">
    <property type="interactions" value="423"/>
</dbReference>
<dbReference type="STRING" id="10116.ENSRNOP00000073077"/>
<dbReference type="iPTMnet" id="O08773"/>
<dbReference type="PhosphoSitePlus" id="O08773"/>
<dbReference type="PaxDb" id="10116-ENSRNOP00000021596"/>
<dbReference type="ABCD" id="O08773">
    <property type="antibodies" value="2 sequenced antibodies"/>
</dbReference>
<dbReference type="Ensembl" id="ENSRNOT00000021596.3">
    <property type="protein sequence ID" value="ENSRNOP00000021596.1"/>
    <property type="gene ID" value="ENSRNOG00000015616.4"/>
</dbReference>
<dbReference type="GeneID" id="114705"/>
<dbReference type="KEGG" id="rno:114705"/>
<dbReference type="UCSC" id="RGD:620003">
    <property type="organism name" value="rat"/>
</dbReference>
<dbReference type="AGR" id="RGD:620003"/>
<dbReference type="CTD" id="10636"/>
<dbReference type="RGD" id="620003">
    <property type="gene designation" value="Rgs14"/>
</dbReference>
<dbReference type="eggNOG" id="KOG3589">
    <property type="taxonomic scope" value="Eukaryota"/>
</dbReference>
<dbReference type="GeneTree" id="ENSGT00940000161364"/>
<dbReference type="InParanoid" id="O08773"/>
<dbReference type="OMA" id="PWAEGHR"/>
<dbReference type="OrthoDB" id="196547at2759"/>
<dbReference type="PhylomeDB" id="O08773"/>
<dbReference type="TreeFam" id="TF328814"/>
<dbReference type="Reactome" id="R-RNO-418594">
    <property type="pathway name" value="G alpha (i) signalling events"/>
</dbReference>
<dbReference type="EvolutionaryTrace" id="O08773"/>
<dbReference type="PRO" id="PR:O08773"/>
<dbReference type="Proteomes" id="UP000002494">
    <property type="component" value="Chromosome 17"/>
</dbReference>
<dbReference type="Bgee" id="ENSRNOG00000015616">
    <property type="expression patterns" value="Expressed in thymus and 17 other cell types or tissues"/>
</dbReference>
<dbReference type="GO" id="GO:0005813">
    <property type="term" value="C:centrosome"/>
    <property type="evidence" value="ECO:0000314"/>
    <property type="project" value="UniProtKB"/>
</dbReference>
<dbReference type="GO" id="GO:0005737">
    <property type="term" value="C:cytoplasm"/>
    <property type="evidence" value="ECO:0000314"/>
    <property type="project" value="UniProtKB"/>
</dbReference>
<dbReference type="GO" id="GO:0030425">
    <property type="term" value="C:dendrite"/>
    <property type="evidence" value="ECO:0000314"/>
    <property type="project" value="RGD"/>
</dbReference>
<dbReference type="GO" id="GO:0043197">
    <property type="term" value="C:dendritic spine"/>
    <property type="evidence" value="ECO:0000250"/>
    <property type="project" value="UniProtKB"/>
</dbReference>
<dbReference type="GO" id="GO:0098978">
    <property type="term" value="C:glutamatergic synapse"/>
    <property type="evidence" value="ECO:0000266"/>
    <property type="project" value="RGD"/>
</dbReference>
<dbReference type="GO" id="GO:0005874">
    <property type="term" value="C:microtubule"/>
    <property type="evidence" value="ECO:0007669"/>
    <property type="project" value="UniProtKB-KW"/>
</dbReference>
<dbReference type="GO" id="GO:0016604">
    <property type="term" value="C:nuclear body"/>
    <property type="evidence" value="ECO:0000250"/>
    <property type="project" value="UniProtKB"/>
</dbReference>
<dbReference type="GO" id="GO:0005634">
    <property type="term" value="C:nucleus"/>
    <property type="evidence" value="ECO:0000314"/>
    <property type="project" value="UniProtKB"/>
</dbReference>
<dbReference type="GO" id="GO:0005886">
    <property type="term" value="C:plasma membrane"/>
    <property type="evidence" value="ECO:0000314"/>
    <property type="project" value="UniProtKB"/>
</dbReference>
<dbReference type="GO" id="GO:0016605">
    <property type="term" value="C:PML body"/>
    <property type="evidence" value="ECO:0007669"/>
    <property type="project" value="UniProtKB-SubCell"/>
</dbReference>
<dbReference type="GO" id="GO:0014069">
    <property type="term" value="C:postsynaptic density"/>
    <property type="evidence" value="ECO:0000250"/>
    <property type="project" value="UniProtKB"/>
</dbReference>
<dbReference type="GO" id="GO:0005819">
    <property type="term" value="C:spindle"/>
    <property type="evidence" value="ECO:0000250"/>
    <property type="project" value="UniProtKB"/>
</dbReference>
<dbReference type="GO" id="GO:0000922">
    <property type="term" value="C:spindle pole"/>
    <property type="evidence" value="ECO:0000314"/>
    <property type="project" value="UniProtKB"/>
</dbReference>
<dbReference type="GO" id="GO:0001965">
    <property type="term" value="F:G-protein alpha-subunit binding"/>
    <property type="evidence" value="ECO:0000353"/>
    <property type="project" value="RGD"/>
</dbReference>
<dbReference type="GO" id="GO:0005092">
    <property type="term" value="F:GDP-dissociation inhibitor activity"/>
    <property type="evidence" value="ECO:0000314"/>
    <property type="project" value="UniProtKB"/>
</dbReference>
<dbReference type="GO" id="GO:0032794">
    <property type="term" value="F:GTPase activating protein binding"/>
    <property type="evidence" value="ECO:0000266"/>
    <property type="project" value="RGD"/>
</dbReference>
<dbReference type="GO" id="GO:0005096">
    <property type="term" value="F:GTPase activator activity"/>
    <property type="evidence" value="ECO:0000314"/>
    <property type="project" value="UniProtKB"/>
</dbReference>
<dbReference type="GO" id="GO:0008017">
    <property type="term" value="F:microtubule binding"/>
    <property type="evidence" value="ECO:0000250"/>
    <property type="project" value="UniProtKB"/>
</dbReference>
<dbReference type="GO" id="GO:0019901">
    <property type="term" value="F:protein kinase binding"/>
    <property type="evidence" value="ECO:0000353"/>
    <property type="project" value="UniProtKB"/>
</dbReference>
<dbReference type="GO" id="GO:0030159">
    <property type="term" value="F:signaling receptor complex adaptor activity"/>
    <property type="evidence" value="ECO:0000314"/>
    <property type="project" value="UniProtKB"/>
</dbReference>
<dbReference type="GO" id="GO:0051301">
    <property type="term" value="P:cell division"/>
    <property type="evidence" value="ECO:0000250"/>
    <property type="project" value="UniProtKB"/>
</dbReference>
<dbReference type="GO" id="GO:0007059">
    <property type="term" value="P:chromosome segregation"/>
    <property type="evidence" value="ECO:0000250"/>
    <property type="project" value="UniProtKB"/>
</dbReference>
<dbReference type="GO" id="GO:0007612">
    <property type="term" value="P:learning"/>
    <property type="evidence" value="ECO:0000250"/>
    <property type="project" value="UniProtKB"/>
</dbReference>
<dbReference type="GO" id="GO:0007616">
    <property type="term" value="P:long-term memory"/>
    <property type="evidence" value="ECO:0000250"/>
    <property type="project" value="UniProtKB"/>
</dbReference>
<dbReference type="GO" id="GO:0060291">
    <property type="term" value="P:long-term synaptic potentiation"/>
    <property type="evidence" value="ECO:0000250"/>
    <property type="project" value="UniProtKB"/>
</dbReference>
<dbReference type="GO" id="GO:0000278">
    <property type="term" value="P:mitotic cell cycle"/>
    <property type="evidence" value="ECO:0000266"/>
    <property type="project" value="RGD"/>
</dbReference>
<dbReference type="GO" id="GO:0050804">
    <property type="term" value="P:modulation of chemical synaptic transmission"/>
    <property type="evidence" value="ECO:0000266"/>
    <property type="project" value="RGD"/>
</dbReference>
<dbReference type="GO" id="GO:0070373">
    <property type="term" value="P:negative regulation of ERK1 and ERK2 cascade"/>
    <property type="evidence" value="ECO:0000314"/>
    <property type="project" value="UniProtKB"/>
</dbReference>
<dbReference type="GO" id="GO:0045744">
    <property type="term" value="P:negative regulation of G protein-coupled receptor signaling pathway"/>
    <property type="evidence" value="ECO:0000250"/>
    <property type="project" value="UniProtKB"/>
</dbReference>
<dbReference type="GO" id="GO:0043407">
    <property type="term" value="P:negative regulation of MAP kinase activity"/>
    <property type="evidence" value="ECO:0000250"/>
    <property type="project" value="UniProtKB"/>
</dbReference>
<dbReference type="GO" id="GO:0031914">
    <property type="term" value="P:negative regulation of synaptic plasticity"/>
    <property type="evidence" value="ECO:0000250"/>
    <property type="project" value="UniProtKB"/>
</dbReference>
<dbReference type="GO" id="GO:0006913">
    <property type="term" value="P:nucleocytoplasmic transport"/>
    <property type="evidence" value="ECO:0000314"/>
    <property type="project" value="UniProtKB"/>
</dbReference>
<dbReference type="GO" id="GO:0048008">
    <property type="term" value="P:platelet-derived growth factor receptor signaling pathway"/>
    <property type="evidence" value="ECO:0000314"/>
    <property type="project" value="UniProtKB"/>
</dbReference>
<dbReference type="GO" id="GO:0050769">
    <property type="term" value="P:positive regulation of neurogenesis"/>
    <property type="evidence" value="ECO:0000315"/>
    <property type="project" value="UniProtKB"/>
</dbReference>
<dbReference type="GO" id="GO:0008277">
    <property type="term" value="P:regulation of G protein-coupled receptor signaling pathway"/>
    <property type="evidence" value="ECO:0000314"/>
    <property type="project" value="RGD"/>
</dbReference>
<dbReference type="GO" id="GO:0006979">
    <property type="term" value="P:response to oxidative stress"/>
    <property type="evidence" value="ECO:0000315"/>
    <property type="project" value="UniProtKB"/>
</dbReference>
<dbReference type="GO" id="GO:0007051">
    <property type="term" value="P:spindle organization"/>
    <property type="evidence" value="ECO:0000250"/>
    <property type="project" value="UniProtKB"/>
</dbReference>
<dbReference type="GO" id="GO:0008542">
    <property type="term" value="P:visual learning"/>
    <property type="evidence" value="ECO:0000315"/>
    <property type="project" value="UniProtKB"/>
</dbReference>
<dbReference type="GO" id="GO:0010070">
    <property type="term" value="P:zygote asymmetric cell division"/>
    <property type="evidence" value="ECO:0000250"/>
    <property type="project" value="UniProtKB"/>
</dbReference>
<dbReference type="CDD" id="cd17137">
    <property type="entry name" value="RBD1_RGS14"/>
    <property type="match status" value="1"/>
</dbReference>
<dbReference type="CDD" id="cd17139">
    <property type="entry name" value="RBD2_RGS14"/>
    <property type="match status" value="1"/>
</dbReference>
<dbReference type="CDD" id="cd08743">
    <property type="entry name" value="RGS_RGS14"/>
    <property type="match status" value="1"/>
</dbReference>
<dbReference type="FunFam" id="1.10.167.10:FF:000001">
    <property type="entry name" value="Putative regulator of g-protein signaling 12"/>
    <property type="match status" value="1"/>
</dbReference>
<dbReference type="FunFam" id="3.10.20.90:FF:000145">
    <property type="entry name" value="regulator of G-protein signaling 14 isoform X1"/>
    <property type="match status" value="1"/>
</dbReference>
<dbReference type="Gene3D" id="1.10.196.10">
    <property type="match status" value="1"/>
</dbReference>
<dbReference type="Gene3D" id="3.10.20.90">
    <property type="entry name" value="Phosphatidylinositol 3-kinase Catalytic Subunit, Chain A, domain 1"/>
    <property type="match status" value="2"/>
</dbReference>
<dbReference type="Gene3D" id="1.10.167.10">
    <property type="entry name" value="Regulator of G-protein Signalling 4, domain 2"/>
    <property type="match status" value="1"/>
</dbReference>
<dbReference type="IDEAL" id="IID50254"/>
<dbReference type="InterPro" id="IPR003109">
    <property type="entry name" value="GoLoco_motif"/>
</dbReference>
<dbReference type="InterPro" id="IPR046992">
    <property type="entry name" value="RBD1_RGS14"/>
</dbReference>
<dbReference type="InterPro" id="IPR046993">
    <property type="entry name" value="RBD2_RGS14"/>
</dbReference>
<dbReference type="InterPro" id="IPR003116">
    <property type="entry name" value="RBD_dom"/>
</dbReference>
<dbReference type="InterPro" id="IPR016137">
    <property type="entry name" value="RGS"/>
</dbReference>
<dbReference type="InterPro" id="IPR046995">
    <property type="entry name" value="RGS10/12/14-like"/>
</dbReference>
<dbReference type="InterPro" id="IPR037881">
    <property type="entry name" value="RGS14_RGS"/>
</dbReference>
<dbReference type="InterPro" id="IPR036305">
    <property type="entry name" value="RGS_sf"/>
</dbReference>
<dbReference type="InterPro" id="IPR024066">
    <property type="entry name" value="RGS_subdom1/3"/>
</dbReference>
<dbReference type="InterPro" id="IPR044926">
    <property type="entry name" value="RGS_subdomain_2"/>
</dbReference>
<dbReference type="InterPro" id="IPR029071">
    <property type="entry name" value="Ubiquitin-like_domsf"/>
</dbReference>
<dbReference type="PANTHER" id="PTHR45945:SF2">
    <property type="entry name" value="REGULATOR OF G-PROTEIN SIGNALING 14"/>
    <property type="match status" value="1"/>
</dbReference>
<dbReference type="PANTHER" id="PTHR45945">
    <property type="entry name" value="REGULATOR OF G-PROTEIN SIGNALING LOCO"/>
    <property type="match status" value="1"/>
</dbReference>
<dbReference type="Pfam" id="PF02188">
    <property type="entry name" value="GoLoco"/>
    <property type="match status" value="1"/>
</dbReference>
<dbReference type="Pfam" id="PF02196">
    <property type="entry name" value="RBD"/>
    <property type="match status" value="1"/>
</dbReference>
<dbReference type="Pfam" id="PF00615">
    <property type="entry name" value="RGS"/>
    <property type="match status" value="1"/>
</dbReference>
<dbReference type="PRINTS" id="PR01301">
    <property type="entry name" value="RGSPROTEIN"/>
</dbReference>
<dbReference type="SMART" id="SM00390">
    <property type="entry name" value="GoLoco"/>
    <property type="match status" value="1"/>
</dbReference>
<dbReference type="SMART" id="SM00455">
    <property type="entry name" value="RBD"/>
    <property type="match status" value="2"/>
</dbReference>
<dbReference type="SMART" id="SM00315">
    <property type="entry name" value="RGS"/>
    <property type="match status" value="1"/>
</dbReference>
<dbReference type="SUPFAM" id="SSF48097">
    <property type="entry name" value="Regulator of G-protein signaling, RGS"/>
    <property type="match status" value="1"/>
</dbReference>
<dbReference type="SUPFAM" id="SSF54236">
    <property type="entry name" value="Ubiquitin-like"/>
    <property type="match status" value="2"/>
</dbReference>
<dbReference type="PROSITE" id="PS50877">
    <property type="entry name" value="GOLOCO"/>
    <property type="match status" value="1"/>
</dbReference>
<dbReference type="PROSITE" id="PS50898">
    <property type="entry name" value="RBD"/>
    <property type="match status" value="2"/>
</dbReference>
<dbReference type="PROSITE" id="PS50132">
    <property type="entry name" value="RGS"/>
    <property type="match status" value="1"/>
</dbReference>
<proteinExistence type="evidence at protein level"/>